<sequence length="447" mass="51966">MIRNVIIGLLAVAVIATGYWGFQEQQQSQILTVQAENGYQRAFHELAYHIDQIEDQLGATMAMNTRRQLTPSLAEVWRLTSLASEEIGQLPLGIVDLSKTEEFLHHLGTFSYKTSIRDLDKEPLTDEEYEKLEKFHDYSKTIKNDLRKTQAMTLKKDMRWLDLNKEFQAQDEPLDNAIVDGFRTMDEHVKGASEVEWGPGMVIRNDHEKKLEKRLEKRKITEEEAKEIALSYVDMEQATDVIVSETGDGLDMYSVIIDDPERQAHYYLDMTQQGGHPIWFLQERQINEQNISLNEASNKAQEFLEEHDKENMQLVDSKQYDSIGVFEFVYLEDNVRVYPDTIKVEVALDEGDIIGYEAMSYLVNHHDRDLEEPELTADEARERLNPRLEVMEDHIALIQNDLGEEVLCYEFFGVINDETYRIYINAEDGEEEKVEKMQEAEPVYDFD</sequence>
<gene>
    <name type="ordered locus">BH1632</name>
</gene>
<reference key="1">
    <citation type="journal article" date="1999" name="Extremophiles">
        <title>Genetic analysis of the chromosome of alkaliphilic Bacillus halodurans C-125.</title>
        <authorList>
            <person name="Takami H."/>
            <person name="Takaki Y."/>
            <person name="Nakasone K."/>
            <person name="Sakiyama T."/>
            <person name="Maeno G."/>
            <person name="Sasaki R."/>
            <person name="Hirama C."/>
            <person name="Fuji F."/>
            <person name="Masui N."/>
        </authorList>
    </citation>
    <scope>NUCLEOTIDE SEQUENCE [GENOMIC DNA]</scope>
    <source>
        <strain>ATCC BAA-125 / DSM 18197 / FERM 7344 / JCM 9153 / C-125</strain>
    </source>
</reference>
<reference key="2">
    <citation type="journal article" date="2000" name="Nucleic Acids Res.">
        <title>Complete genome sequence of the alkaliphilic bacterium Bacillus halodurans and genomic sequence comparison with Bacillus subtilis.</title>
        <authorList>
            <person name="Takami H."/>
            <person name="Nakasone K."/>
            <person name="Takaki Y."/>
            <person name="Maeno G."/>
            <person name="Sasaki R."/>
            <person name="Masui N."/>
            <person name="Fuji F."/>
            <person name="Hirama C."/>
            <person name="Nakamura Y."/>
            <person name="Ogasawara N."/>
            <person name="Kuhara S."/>
            <person name="Horikoshi K."/>
        </authorList>
    </citation>
    <scope>NUCLEOTIDE SEQUENCE [LARGE SCALE GENOMIC DNA]</scope>
    <source>
        <strain>ATCC BAA-125 / DSM 18197 / FERM 7344 / JCM 9153 / C-125</strain>
    </source>
</reference>
<proteinExistence type="inferred from homology"/>
<evidence type="ECO:0000250" key="1"/>
<evidence type="ECO:0000305" key="2"/>
<comment type="function">
    <text evidence="1">Required for spore cortex hydrolysis during germination. Appears to be required for either expression, localization, activation or function of SleB (By similarity).</text>
</comment>
<comment type="similarity">
    <text evidence="2">Belongs to the YpeB family.</text>
</comment>
<name>YPEB_HALH5</name>
<keyword id="KW-0309">Germination</keyword>
<keyword id="KW-1185">Reference proteome</keyword>
<keyword id="KW-0749">Sporulation</keyword>
<organism>
    <name type="scientific">Halalkalibacterium halodurans (strain ATCC BAA-125 / DSM 18197 / FERM 7344 / JCM 9153 / C-125)</name>
    <name type="common">Bacillus halodurans</name>
    <dbReference type="NCBI Taxonomy" id="272558"/>
    <lineage>
        <taxon>Bacteria</taxon>
        <taxon>Bacillati</taxon>
        <taxon>Bacillota</taxon>
        <taxon>Bacilli</taxon>
        <taxon>Bacillales</taxon>
        <taxon>Bacillaceae</taxon>
        <taxon>Halalkalibacterium (ex Joshi et al. 2022)</taxon>
    </lineage>
</organism>
<accession>Q9RC82</accession>
<dbReference type="EMBL" id="AB024552">
    <property type="protein sequence ID" value="BAA83917.1"/>
    <property type="molecule type" value="Genomic_DNA"/>
</dbReference>
<dbReference type="EMBL" id="BA000004">
    <property type="protein sequence ID" value="BAB05351.1"/>
    <property type="molecule type" value="Genomic_DNA"/>
</dbReference>
<dbReference type="PIR" id="H83853">
    <property type="entry name" value="H83853"/>
</dbReference>
<dbReference type="RefSeq" id="WP_010897795.1">
    <property type="nucleotide sequence ID" value="NC_002570.2"/>
</dbReference>
<dbReference type="SMR" id="Q9RC82"/>
<dbReference type="STRING" id="272558.gene:10727530"/>
<dbReference type="KEGG" id="bha:BH1632"/>
<dbReference type="eggNOG" id="COG2959">
    <property type="taxonomic scope" value="Bacteria"/>
</dbReference>
<dbReference type="HOGENOM" id="CLU_045803_0_0_9"/>
<dbReference type="OrthoDB" id="2372097at2"/>
<dbReference type="Proteomes" id="UP000001258">
    <property type="component" value="Chromosome"/>
</dbReference>
<dbReference type="GO" id="GO:0009847">
    <property type="term" value="P:spore germination"/>
    <property type="evidence" value="ECO:0007669"/>
    <property type="project" value="InterPro"/>
</dbReference>
<dbReference type="GO" id="GO:0030435">
    <property type="term" value="P:sporulation resulting in formation of a cellular spore"/>
    <property type="evidence" value="ECO:0007669"/>
    <property type="project" value="UniProtKB-KW"/>
</dbReference>
<dbReference type="InterPro" id="IPR025711">
    <property type="entry name" value="PepSY"/>
</dbReference>
<dbReference type="InterPro" id="IPR048402">
    <property type="entry name" value="YpeB_N"/>
</dbReference>
<dbReference type="InterPro" id="IPR014239">
    <property type="entry name" value="YpeB_PepSY1-2"/>
</dbReference>
<dbReference type="NCBIfam" id="TIGR02889">
    <property type="entry name" value="spore_YpeB"/>
    <property type="match status" value="1"/>
</dbReference>
<dbReference type="Pfam" id="PF03413">
    <property type="entry name" value="PepSY"/>
    <property type="match status" value="1"/>
</dbReference>
<dbReference type="Pfam" id="PF20769">
    <property type="entry name" value="YPEB_N"/>
    <property type="match status" value="1"/>
</dbReference>
<dbReference type="Pfam" id="PF14620">
    <property type="entry name" value="YPEB_PepSY1-2"/>
    <property type="match status" value="1"/>
</dbReference>
<feature type="chain" id="PRO_0000066394" description="Sporulation protein YpeB">
    <location>
        <begin position="1"/>
        <end position="447"/>
    </location>
</feature>
<protein>
    <recommendedName>
        <fullName>Sporulation protein YpeB</fullName>
    </recommendedName>
</protein>